<accession>B1HR05</accession>
<feature type="chain" id="PRO_1000093801" description="Translation initiation factor IF-2">
    <location>
        <begin position="1"/>
        <end position="758"/>
    </location>
</feature>
<feature type="domain" description="tr-type G">
    <location>
        <begin position="259"/>
        <end position="428"/>
    </location>
</feature>
<feature type="region of interest" description="Disordered" evidence="3">
    <location>
        <begin position="55"/>
        <end position="168"/>
    </location>
</feature>
<feature type="region of interest" description="G1" evidence="1">
    <location>
        <begin position="268"/>
        <end position="275"/>
    </location>
</feature>
<feature type="region of interest" description="G2" evidence="1">
    <location>
        <begin position="293"/>
        <end position="297"/>
    </location>
</feature>
<feature type="region of interest" description="G3" evidence="1">
    <location>
        <begin position="314"/>
        <end position="317"/>
    </location>
</feature>
<feature type="region of interest" description="G4" evidence="1">
    <location>
        <begin position="368"/>
        <end position="371"/>
    </location>
</feature>
<feature type="region of interest" description="G5" evidence="1">
    <location>
        <begin position="404"/>
        <end position="406"/>
    </location>
</feature>
<feature type="compositionally biased region" description="Polar residues" evidence="3">
    <location>
        <begin position="60"/>
        <end position="78"/>
    </location>
</feature>
<feature type="compositionally biased region" description="Polar residues" evidence="3">
    <location>
        <begin position="86"/>
        <end position="95"/>
    </location>
</feature>
<feature type="compositionally biased region" description="Low complexity" evidence="3">
    <location>
        <begin position="96"/>
        <end position="136"/>
    </location>
</feature>
<feature type="binding site" evidence="2">
    <location>
        <begin position="268"/>
        <end position="275"/>
    </location>
    <ligand>
        <name>GTP</name>
        <dbReference type="ChEBI" id="CHEBI:37565"/>
    </ligand>
</feature>
<feature type="binding site" evidence="2">
    <location>
        <begin position="314"/>
        <end position="318"/>
    </location>
    <ligand>
        <name>GTP</name>
        <dbReference type="ChEBI" id="CHEBI:37565"/>
    </ligand>
</feature>
<feature type="binding site" evidence="2">
    <location>
        <begin position="368"/>
        <end position="371"/>
    </location>
    <ligand>
        <name>GTP</name>
        <dbReference type="ChEBI" id="CHEBI:37565"/>
    </ligand>
</feature>
<dbReference type="EMBL" id="CP000817">
    <property type="protein sequence ID" value="ACA39196.1"/>
    <property type="molecule type" value="Genomic_DNA"/>
</dbReference>
<dbReference type="RefSeq" id="WP_012293304.1">
    <property type="nucleotide sequence ID" value="NC_010382.1"/>
</dbReference>
<dbReference type="SMR" id="B1HR05"/>
<dbReference type="EnsemblBacteria" id="ACA39196">
    <property type="protein sequence ID" value="ACA39196"/>
    <property type="gene ID" value="Bsph_1598"/>
</dbReference>
<dbReference type="KEGG" id="lsp:Bsph_1598"/>
<dbReference type="HOGENOM" id="CLU_006301_5_1_9"/>
<dbReference type="Proteomes" id="UP000002164">
    <property type="component" value="Chromosome"/>
</dbReference>
<dbReference type="GO" id="GO:0005829">
    <property type="term" value="C:cytosol"/>
    <property type="evidence" value="ECO:0007669"/>
    <property type="project" value="TreeGrafter"/>
</dbReference>
<dbReference type="GO" id="GO:0005525">
    <property type="term" value="F:GTP binding"/>
    <property type="evidence" value="ECO:0007669"/>
    <property type="project" value="UniProtKB-KW"/>
</dbReference>
<dbReference type="GO" id="GO:0003924">
    <property type="term" value="F:GTPase activity"/>
    <property type="evidence" value="ECO:0007669"/>
    <property type="project" value="UniProtKB-UniRule"/>
</dbReference>
<dbReference type="GO" id="GO:0003743">
    <property type="term" value="F:translation initiation factor activity"/>
    <property type="evidence" value="ECO:0007669"/>
    <property type="project" value="UniProtKB-UniRule"/>
</dbReference>
<dbReference type="CDD" id="cd01887">
    <property type="entry name" value="IF2_eIF5B"/>
    <property type="match status" value="1"/>
</dbReference>
<dbReference type="CDD" id="cd03702">
    <property type="entry name" value="IF2_mtIF2_II"/>
    <property type="match status" value="1"/>
</dbReference>
<dbReference type="CDD" id="cd03692">
    <property type="entry name" value="mtIF2_IVc"/>
    <property type="match status" value="1"/>
</dbReference>
<dbReference type="FunFam" id="2.40.30.10:FF:000007">
    <property type="entry name" value="Translation initiation factor IF-2"/>
    <property type="match status" value="1"/>
</dbReference>
<dbReference type="FunFam" id="2.40.30.10:FF:000008">
    <property type="entry name" value="Translation initiation factor IF-2"/>
    <property type="match status" value="1"/>
</dbReference>
<dbReference type="FunFam" id="3.40.50.10050:FF:000001">
    <property type="entry name" value="Translation initiation factor IF-2"/>
    <property type="match status" value="1"/>
</dbReference>
<dbReference type="FunFam" id="3.40.50.300:FF:000019">
    <property type="entry name" value="Translation initiation factor IF-2"/>
    <property type="match status" value="1"/>
</dbReference>
<dbReference type="Gene3D" id="1.10.10.2480">
    <property type="match status" value="1"/>
</dbReference>
<dbReference type="Gene3D" id="3.40.50.300">
    <property type="entry name" value="P-loop containing nucleotide triphosphate hydrolases"/>
    <property type="match status" value="1"/>
</dbReference>
<dbReference type="Gene3D" id="2.40.30.10">
    <property type="entry name" value="Translation factors"/>
    <property type="match status" value="2"/>
</dbReference>
<dbReference type="Gene3D" id="3.40.50.10050">
    <property type="entry name" value="Translation initiation factor IF- 2, domain 3"/>
    <property type="match status" value="1"/>
</dbReference>
<dbReference type="HAMAP" id="MF_00100_B">
    <property type="entry name" value="IF_2_B"/>
    <property type="match status" value="1"/>
</dbReference>
<dbReference type="InterPro" id="IPR053905">
    <property type="entry name" value="EF-G-like_DII"/>
</dbReference>
<dbReference type="InterPro" id="IPR044145">
    <property type="entry name" value="IF2_II"/>
</dbReference>
<dbReference type="InterPro" id="IPR006847">
    <property type="entry name" value="IF2_N"/>
</dbReference>
<dbReference type="InterPro" id="IPR027417">
    <property type="entry name" value="P-loop_NTPase"/>
</dbReference>
<dbReference type="InterPro" id="IPR005225">
    <property type="entry name" value="Small_GTP-bd"/>
</dbReference>
<dbReference type="InterPro" id="IPR000795">
    <property type="entry name" value="T_Tr_GTP-bd_dom"/>
</dbReference>
<dbReference type="InterPro" id="IPR000178">
    <property type="entry name" value="TF_IF2_bacterial-like"/>
</dbReference>
<dbReference type="InterPro" id="IPR015760">
    <property type="entry name" value="TIF_IF2"/>
</dbReference>
<dbReference type="InterPro" id="IPR023115">
    <property type="entry name" value="TIF_IF2_dom3"/>
</dbReference>
<dbReference type="InterPro" id="IPR036925">
    <property type="entry name" value="TIF_IF2_dom3_sf"/>
</dbReference>
<dbReference type="InterPro" id="IPR009000">
    <property type="entry name" value="Transl_B-barrel_sf"/>
</dbReference>
<dbReference type="NCBIfam" id="TIGR00487">
    <property type="entry name" value="IF-2"/>
    <property type="match status" value="1"/>
</dbReference>
<dbReference type="NCBIfam" id="TIGR00231">
    <property type="entry name" value="small_GTP"/>
    <property type="match status" value="1"/>
</dbReference>
<dbReference type="PANTHER" id="PTHR43381:SF5">
    <property type="entry name" value="TR-TYPE G DOMAIN-CONTAINING PROTEIN"/>
    <property type="match status" value="1"/>
</dbReference>
<dbReference type="PANTHER" id="PTHR43381">
    <property type="entry name" value="TRANSLATION INITIATION FACTOR IF-2-RELATED"/>
    <property type="match status" value="1"/>
</dbReference>
<dbReference type="Pfam" id="PF22042">
    <property type="entry name" value="EF-G_D2"/>
    <property type="match status" value="1"/>
</dbReference>
<dbReference type="Pfam" id="PF00009">
    <property type="entry name" value="GTP_EFTU"/>
    <property type="match status" value="1"/>
</dbReference>
<dbReference type="Pfam" id="PF11987">
    <property type="entry name" value="IF-2"/>
    <property type="match status" value="1"/>
</dbReference>
<dbReference type="Pfam" id="PF04760">
    <property type="entry name" value="IF2_N"/>
    <property type="match status" value="2"/>
</dbReference>
<dbReference type="SUPFAM" id="SSF52156">
    <property type="entry name" value="Initiation factor IF2/eIF5b, domain 3"/>
    <property type="match status" value="1"/>
</dbReference>
<dbReference type="SUPFAM" id="SSF52540">
    <property type="entry name" value="P-loop containing nucleoside triphosphate hydrolases"/>
    <property type="match status" value="1"/>
</dbReference>
<dbReference type="SUPFAM" id="SSF50447">
    <property type="entry name" value="Translation proteins"/>
    <property type="match status" value="2"/>
</dbReference>
<dbReference type="PROSITE" id="PS51722">
    <property type="entry name" value="G_TR_2"/>
    <property type="match status" value="1"/>
</dbReference>
<dbReference type="PROSITE" id="PS01176">
    <property type="entry name" value="IF2"/>
    <property type="match status" value="1"/>
</dbReference>
<organism>
    <name type="scientific">Lysinibacillus sphaericus (strain C3-41)</name>
    <dbReference type="NCBI Taxonomy" id="444177"/>
    <lineage>
        <taxon>Bacteria</taxon>
        <taxon>Bacillati</taxon>
        <taxon>Bacillota</taxon>
        <taxon>Bacilli</taxon>
        <taxon>Bacillales</taxon>
        <taxon>Bacillaceae</taxon>
        <taxon>Lysinibacillus</taxon>
    </lineage>
</organism>
<protein>
    <recommendedName>
        <fullName evidence="2">Translation initiation factor IF-2</fullName>
    </recommendedName>
</protein>
<evidence type="ECO:0000250" key="1"/>
<evidence type="ECO:0000255" key="2">
    <source>
        <dbReference type="HAMAP-Rule" id="MF_00100"/>
    </source>
</evidence>
<evidence type="ECO:0000256" key="3">
    <source>
        <dbReference type="SAM" id="MobiDB-lite"/>
    </source>
</evidence>
<comment type="function">
    <text evidence="2">One of the essential components for the initiation of protein synthesis. Protects formylmethionyl-tRNA from spontaneous hydrolysis and promotes its binding to the 30S ribosomal subunits. Also involved in the hydrolysis of GTP during the formation of the 70S ribosomal complex.</text>
</comment>
<comment type="subcellular location">
    <subcellularLocation>
        <location evidence="2">Cytoplasm</location>
    </subcellularLocation>
</comment>
<comment type="similarity">
    <text evidence="2">Belongs to the TRAFAC class translation factor GTPase superfamily. Classic translation factor GTPase family. IF-2 subfamily.</text>
</comment>
<sequence>MTKIRVHEYAKQVNKTSKEVIEALSKLNVSVTNHMSMLEKDIVSKLNQTFKATPEKNVGKQATQNISQKSQSNGQQNHSVKKQEGQRQQSATSKPKVNNQQHSNSSNEKSKNTKGNQNRNMTQNNNNNNNNNNNNRRGGGGYNQRPKPGIHGGKRRHPKTHQPSIPVKQKELPEKITFVESLSVAELAKKLHREPSEIIKKLFMLGVMATINQELDKDAIELICADYGVEVEEEIRVDITDLETHFEQTEEVNEAQLSERPPVVTIMGHVDHGKTTLLDSIRNTKVTAGEAGGITQHIGAYQVTEGDKKITFLDTPGHAAFTTMRARGAKVTDLTILVVAADDGVMPQTVEAINHAKAAEVPIIVAVNKMDKPSANPDRVMQELTEHGLVPEAWGGETIFVPISALKGEGIDTLLEMILLVAEVGELKANPDRLALGTVIEAQLDKGRGSVATLLVQDGTLKVGDPIVVGHTFGRVRAMVNDKGRRVKEAGPSTPVEITGLNDVPQAGDRFVVFEDEKTARQVGETRAMSAIQAQRSEKQRVTLDNLFEQMSQGEMKELNLIVKADVQGTVEAMAASLMKIDVEGVNVKIIHTGAGAITESDISLAAASNAIVIGFNVRPDVNAKRAAEEEGVDIRLHRIIYKVIEEIEQAMKGMLDPEFEEKIIGQAEVRQTIKVSKVGTIAGSYVTEGKVTRDSGVRVIRDNVVIFEGELDTLKRFKDEVKEVARGYECGITITNFNDIKEGDIIEAYIMEEVKRV</sequence>
<name>IF2_LYSSC</name>
<proteinExistence type="inferred from homology"/>
<reference key="1">
    <citation type="journal article" date="2008" name="J. Bacteriol.">
        <title>Complete genome sequence of the mosquitocidal bacterium Bacillus sphaericus C3-41 and comparison with those of closely related Bacillus species.</title>
        <authorList>
            <person name="Hu X."/>
            <person name="Fan W."/>
            <person name="Han B."/>
            <person name="Liu H."/>
            <person name="Zheng D."/>
            <person name="Li Q."/>
            <person name="Dong W."/>
            <person name="Yan J."/>
            <person name="Gao M."/>
            <person name="Berry C."/>
            <person name="Yuan Z."/>
        </authorList>
    </citation>
    <scope>NUCLEOTIDE SEQUENCE [LARGE SCALE GENOMIC DNA]</scope>
    <source>
        <strain>C3-41</strain>
    </source>
</reference>
<gene>
    <name evidence="2" type="primary">infB</name>
    <name type="ordered locus">Bsph_1598</name>
</gene>
<keyword id="KW-0963">Cytoplasm</keyword>
<keyword id="KW-0342">GTP-binding</keyword>
<keyword id="KW-0396">Initiation factor</keyword>
<keyword id="KW-0547">Nucleotide-binding</keyword>
<keyword id="KW-0648">Protein biosynthesis</keyword>